<sequence>AVITGACERDLQCGKGTCCAVSLWIKSVRVCTPVGTSGEDCHPASHKIPFSGQRMHHTCPCAPNLACVQTSPKKFKCLSKS</sequence>
<keyword id="KW-0002">3D-structure</keyword>
<keyword id="KW-0903">Direct protein sequencing</keyword>
<keyword id="KW-1015">Disulfide bond</keyword>
<keyword id="KW-1213">G-protein coupled receptor impairing toxin</keyword>
<keyword id="KW-0964">Secreted</keyword>
<keyword id="KW-0800">Toxin</keyword>
<organism>
    <name type="scientific">Dendroaspis polylepis polylepis</name>
    <name type="common">Black mamba</name>
    <dbReference type="NCBI Taxonomy" id="8620"/>
    <lineage>
        <taxon>Eukaryota</taxon>
        <taxon>Metazoa</taxon>
        <taxon>Chordata</taxon>
        <taxon>Craniata</taxon>
        <taxon>Vertebrata</taxon>
        <taxon>Euteleostomi</taxon>
        <taxon>Lepidosauria</taxon>
        <taxon>Squamata</taxon>
        <taxon>Bifurcata</taxon>
        <taxon>Unidentata</taxon>
        <taxon>Episquamata</taxon>
        <taxon>Toxicofera</taxon>
        <taxon>Serpentes</taxon>
        <taxon>Colubroidea</taxon>
        <taxon>Elapidae</taxon>
        <taxon>Elapinae</taxon>
        <taxon>Dendroaspis</taxon>
    </lineage>
</organism>
<reference key="1">
    <citation type="journal article" date="1999" name="FEBS Lett.">
        <title>MIT1, a black mamba toxin with a new and highly potent activity on intestinal contraction.</title>
        <authorList>
            <person name="Schweitz H."/>
            <person name="Pascaud P."/>
            <person name="Diochot S."/>
            <person name="Moinier D."/>
            <person name="Lazdunski M."/>
        </authorList>
    </citation>
    <scope>PROTEIN SEQUENCE</scope>
    <scope>SEQUENCE REVISION TO 18; 22 AND 54</scope>
    <scope>FUNCTION</scope>
    <scope>SUBCELLULAR LOCATION</scope>
    <source>
        <tissue>Venom</tissue>
    </source>
</reference>
<reference key="2">
    <citation type="journal article" date="1980" name="Hoppe-Seyler's Z. Physiol. Chem.">
        <title>Snake venom. The amino acid sequence of protein A from Dendroaspis polylepis polylepis (black mamba) venom.</title>
        <authorList>
            <person name="Joubert F.J."/>
            <person name="Strydom D.J."/>
        </authorList>
    </citation>
    <scope>PROTEIN SEQUENCE OF 1-80</scope>
    <source>
        <tissue>Venom</tissue>
    </source>
</reference>
<reference key="3">
    <citation type="journal article" date="2002" name="Biochem. Biophys. Res. Commun.">
        <title>Isolation and identification of EG-VEGF/prokineticins as cognate ligands for two orphan G-protein-coupled receptors.</title>
        <authorList>
            <person name="Masuda Y."/>
            <person name="Takatsu Y."/>
            <person name="Terao Y."/>
            <person name="Kumano S."/>
            <person name="Ishibashi Y."/>
            <person name="Suenaga M."/>
            <person name="Abe M."/>
            <person name="Fukusumi S."/>
            <person name="Watanabe T."/>
            <person name="Shintani Y."/>
            <person name="Yamada T."/>
            <person name="Hinuma S."/>
            <person name="Inatomi N."/>
            <person name="Ohtaki T."/>
            <person name="Onda H."/>
            <person name="Fujino M."/>
        </authorList>
    </citation>
    <scope>PARTIAL PROTEIN SEQUENCE</scope>
    <scope>FUNCTION</scope>
    <scope>ACTIVITY PROFILE</scope>
    <source>
        <tissue>Venom</tissue>
    </source>
</reference>
<reference key="4">
    <citation type="journal article" date="1998" name="J. Mol. Biol.">
        <title>A structural homologue of colipase in black mamba venom revealed by NMR floating disulphide bridge analysis.</title>
        <authorList>
            <person name="Boisbouvier J."/>
            <person name="Albrand J.-P."/>
            <person name="Blackledge M."/>
            <person name="Jaquinod M."/>
            <person name="Schweitz H."/>
            <person name="Lazdunski M."/>
            <person name="Marion D."/>
        </authorList>
    </citation>
    <scope>STRUCTURE BY NMR OF 1-80</scope>
    <scope>DISULFIDE BONDS</scope>
    <source>
        <tissue>Venom</tissue>
    </source>
</reference>
<evidence type="ECO:0000269" key="1">
    <source>
    </source>
</evidence>
<evidence type="ECO:0000269" key="2">
    <source>
    </source>
</evidence>
<evidence type="ECO:0000269" key="3">
    <source>
    </source>
</evidence>
<evidence type="ECO:0000303" key="4">
    <source>
    </source>
</evidence>
<evidence type="ECO:0000303" key="5">
    <source>
    </source>
</evidence>
<evidence type="ECO:0000305" key="6"/>
<evidence type="ECO:0000305" key="7">
    <source>
    </source>
</evidence>
<evidence type="ECO:0007829" key="8">
    <source>
        <dbReference type="PDB" id="1IMT"/>
    </source>
</evidence>
<comment type="function">
    <text evidence="1 2">Potent agonist for both PKR1/PROKR1 and PKR2/PROKR2 (PubMed:12054613). Potently contracts gastrointestinal (GI) smooth muscle (PubMed:10567694).</text>
</comment>
<comment type="subcellular location">
    <subcellularLocation>
        <location evidence="1">Secreted</location>
    </subcellularLocation>
</comment>
<comment type="tissue specificity">
    <text evidence="7">Expressed by the venom gland.</text>
</comment>
<comment type="miscellaneous">
    <text evidence="1">Negative results: does not inhibit Kv1.1/KCNA1, Kv1.2/KCNA2, Kv1.3/KCNA3, Kv1.4/KCNA4, Kv1.5/KCNA5, Kv2.1/KCNB1, Kv3.4/KCNC4, Kv4.2/KCND2, K2P2.1/KCNK2, Kv11/KCNH, Kv7.1/KCNQ1, Kv7.2/KCNQ2, Kv7.3/KCNQ3, Kir1.1/KCNJ1, Kir2.1/KCNJ2, Kir2.2/KCNJ12, Kir3.1/KCNJ3-Kir3.2/KCNJ6 (GIRK1,2) and Kir3.1/KCNJ3-Kir3.4/KCNJ5 (GIRK1,4).</text>
</comment>
<comment type="similarity">
    <text evidence="6">Belongs to the AVIT (prokineticin) family.</text>
</comment>
<dbReference type="PDB" id="1IMT">
    <property type="method" value="NMR"/>
    <property type="chains" value="A=1-80"/>
</dbReference>
<dbReference type="PDBsum" id="1IMT"/>
<dbReference type="SMR" id="P25687"/>
<dbReference type="EvolutionaryTrace" id="P25687"/>
<dbReference type="GO" id="GO:0005576">
    <property type="term" value="C:extracellular region"/>
    <property type="evidence" value="ECO:0007669"/>
    <property type="project" value="UniProtKB-SubCell"/>
</dbReference>
<dbReference type="GO" id="GO:0090729">
    <property type="term" value="F:toxin activity"/>
    <property type="evidence" value="ECO:0007669"/>
    <property type="project" value="UniProtKB-KW"/>
</dbReference>
<dbReference type="GO" id="GO:0001935">
    <property type="term" value="P:endothelial cell proliferation"/>
    <property type="evidence" value="ECO:0007669"/>
    <property type="project" value="TreeGrafter"/>
</dbReference>
<dbReference type="Gene3D" id="2.10.80.10">
    <property type="entry name" value="Lipase, subunit A"/>
    <property type="match status" value="1"/>
</dbReference>
<dbReference type="InterPro" id="IPR009523">
    <property type="entry name" value="Prokineticin"/>
</dbReference>
<dbReference type="InterPro" id="IPR023569">
    <property type="entry name" value="Prokineticin_domain"/>
</dbReference>
<dbReference type="PANTHER" id="PTHR18821:SF2">
    <property type="entry name" value="DICKKOPF-RELATED PROTEIN 3-LIKE"/>
    <property type="match status" value="1"/>
</dbReference>
<dbReference type="PANTHER" id="PTHR18821">
    <property type="entry name" value="PROKINETICIN"/>
    <property type="match status" value="1"/>
</dbReference>
<dbReference type="Pfam" id="PF06607">
    <property type="entry name" value="Prokineticin"/>
    <property type="match status" value="1"/>
</dbReference>
<dbReference type="SUPFAM" id="SSF57190">
    <property type="entry name" value="Colipase-like"/>
    <property type="match status" value="2"/>
</dbReference>
<proteinExistence type="evidence at protein level"/>
<accession>P25687</accession>
<name>MIT1_DENPO</name>
<protein>
    <recommendedName>
        <fullName evidence="4">Toxin MIT1</fullName>
        <shortName evidence="4">MIT 1</shortName>
    </recommendedName>
    <alternativeName>
        <fullName evidence="4">Black mamba intestinal toxin 1</fullName>
    </alternativeName>
    <alternativeName>
        <fullName evidence="5">Black mamba venom protein A</fullName>
    </alternativeName>
</protein>
<feature type="chain" id="PRO_0000165469" description="Toxin MIT1" evidence="4">
    <location>
        <begin position="1"/>
        <end position="81"/>
    </location>
</feature>
<feature type="disulfide bond" evidence="3">
    <location>
        <begin position="7"/>
        <end position="19"/>
    </location>
</feature>
<feature type="disulfide bond" evidence="3">
    <location>
        <begin position="13"/>
        <end position="31"/>
    </location>
</feature>
<feature type="disulfide bond" evidence="3">
    <location>
        <begin position="18"/>
        <end position="59"/>
    </location>
</feature>
<feature type="disulfide bond" evidence="3">
    <location>
        <begin position="41"/>
        <end position="67"/>
    </location>
</feature>
<feature type="disulfide bond" evidence="3">
    <location>
        <begin position="61"/>
        <end position="77"/>
    </location>
</feature>
<feature type="sequence variant" description="In protein A'.">
    <original>P</original>
    <variation>Q</variation>
    <location>
        <position position="72"/>
    </location>
</feature>
<feature type="helix" evidence="8">
    <location>
        <begin position="10"/>
        <end position="12"/>
    </location>
</feature>
<feature type="strand" evidence="8">
    <location>
        <begin position="17"/>
        <end position="21"/>
    </location>
</feature>
<feature type="strand" evidence="8">
    <location>
        <begin position="29"/>
        <end position="33"/>
    </location>
</feature>
<feature type="strand" evidence="8">
    <location>
        <begin position="66"/>
        <end position="71"/>
    </location>
</feature>
<feature type="strand" evidence="8">
    <location>
        <begin position="74"/>
        <end position="78"/>
    </location>
</feature>